<comment type="function">
    <text evidence="1 2 6">Catalytic subunit of the phagocyte NADPH oxidase complex that mediates the transfer of electrons from cytosolic NADPH to O2 to produce the superoxide anion (O2(-)). In the activated complex, electrons are first transferred from NADPH to flavin adenine dinucleotide (FAD) and subsequently transferred via two heme molecules to molecular oxygen, producing superoxide through an outer-sphere reaction. Activation of the NADPH oxidase complex is initiated by the assembly of cytosolic subunits of the NADPH oxidase complex with the core NADPH oxidase complex to form a complex at the plasma membrane or phagosomal membrane (By similarity). This activation process is initiated by phosphorylation dependent binding of the cytosolic NCF1/p47-phox subunit to the C-terminus of CYBA/p22-phox (By similarity). NADPH oxidase complex assembly is impaired through interaction with NRROS (PubMed:24739962).</text>
</comment>
<comment type="catalytic activity">
    <reaction evidence="1">
        <text>NADPH + 2 O2 = 2 superoxide + NADP(+) + H(+)</text>
        <dbReference type="Rhea" id="RHEA:63180"/>
        <dbReference type="ChEBI" id="CHEBI:15378"/>
        <dbReference type="ChEBI" id="CHEBI:15379"/>
        <dbReference type="ChEBI" id="CHEBI:18421"/>
        <dbReference type="ChEBI" id="CHEBI:57783"/>
        <dbReference type="ChEBI" id="CHEBI:58349"/>
    </reaction>
</comment>
<comment type="cofactor">
    <cofactor evidence="1">
        <name>FAD</name>
        <dbReference type="ChEBI" id="CHEBI:57692"/>
    </cofactor>
</comment>
<comment type="subunit">
    <text evidence="1 5 6">Component of the phagocyte NADPH oxidase core complex/cytochrome b558 complex, composed of CYBB (heavy chain (beta)) and CYBA (light chain (alpha)). Component of the phagocyte NADPH oxidase complex composed of an obligatory core heterodimer formed by the membrane proteins CYBA and CYBB and the cytosolic regulatory subunits NCF1/p47-phox, NCF2/p67-phox, NCF4/p40-phox and the small GTPase RAC1 or RAC2. Interacts with NCF1 (phosphorylated form) (By similarity). Interacts with NCF2; the interaction is enhanced in the presence of GBP7 (PubMed:21551061). Interacts with RAC2. Interacts with RAC1. Interacts with calprotectin (S100A8/9) (By similarity). Interacts with NRROS; the interaction is direct and impairs formation of a stable NADPH oxidase complex (PubMed:24739962). Interacts with CYBC1; CYBC1 may act as a chaperone stabilizing Cytochrome b-245 heterodimer (By similarity). The CYBA:CYBB complex interacts with GBP7 (PubMed:21551061).</text>
</comment>
<comment type="interaction">
    <interactant intactId="EBI-6654585">
        <id>Q61093</id>
    </interactant>
    <interactant intactId="EBI-15795776">
        <id>Q61462</id>
        <label>Cyba</label>
    </interactant>
    <organismsDiffer>false</organismsDiffer>
    <experiments>4</experiments>
</comment>
<comment type="interaction">
    <interactant intactId="EBI-6654585">
        <id>Q61093</id>
    </interactant>
    <interactant intactId="EBI-16102695">
        <id>Q8BMT4</id>
        <label>Nrros</label>
    </interactant>
    <organismsDiffer>false</organismsDiffer>
    <experiments>4</experiments>
</comment>
<comment type="subcellular location">
    <subcellularLocation>
        <location evidence="1">Cell membrane</location>
        <topology evidence="1">Multi-pass membrane protein</topology>
    </subcellularLocation>
    <text evidence="10">As unassembled monomer may localize to the endoplasmic reticulum.</text>
</comment>
<comment type="PTM">
    <text evidence="1">Glycosylated.</text>
</comment>
<comment type="PTM">
    <text evidence="1">Phosphorylated on Ser and Thr residues by PKC during neutrophils activation. Phosphorylation enhances the NADPH oxidase activity and stimulates its interaction with RAC2, NCF2/p67-phox, and NCF1/p47-phox.</text>
</comment>
<comment type="PTM">
    <text evidence="7">Undergoes 'Lys-48'-linked polyubiquitination, likely by RNF145, triggering endoplasmic reticulum-associated degradation.</text>
</comment>
<comment type="disruption phenotype">
    <text evidence="8">Mutants have a very sever defect in controlling bacterial replication.</text>
</comment>
<dbReference type="EC" id="1.6.3.-" evidence="1"/>
<dbReference type="EMBL" id="U43384">
    <property type="protein sequence ID" value="AAB05997.1"/>
    <property type="molecule type" value="mRNA"/>
</dbReference>
<dbReference type="EMBL" id="BC071229">
    <property type="protein sequence ID" value="AAH71229.1"/>
    <property type="molecule type" value="mRNA"/>
</dbReference>
<dbReference type="CCDS" id="CCDS30010.1"/>
<dbReference type="RefSeq" id="NP_031833.3">
    <property type="nucleotide sequence ID" value="NM_007807.5"/>
</dbReference>
<dbReference type="RefSeq" id="XP_006527628.1">
    <property type="nucleotide sequence ID" value="XM_006527565.4"/>
</dbReference>
<dbReference type="SMR" id="Q61093"/>
<dbReference type="BioGRID" id="198990">
    <property type="interactions" value="31"/>
</dbReference>
<dbReference type="DIP" id="DIP-60841N"/>
<dbReference type="FunCoup" id="Q61093">
    <property type="interactions" value="1451"/>
</dbReference>
<dbReference type="IntAct" id="Q61093">
    <property type="interactions" value="6"/>
</dbReference>
<dbReference type="MINT" id="Q61093"/>
<dbReference type="STRING" id="10090.ENSMUSP00000015484"/>
<dbReference type="PeroxiBase" id="5957">
    <property type="entry name" value="MmNOx02"/>
</dbReference>
<dbReference type="GlyCosmos" id="Q61093">
    <property type="glycosylation" value="1 site, No reported glycans"/>
</dbReference>
<dbReference type="GlyGen" id="Q61093">
    <property type="glycosylation" value="1 site"/>
</dbReference>
<dbReference type="iPTMnet" id="Q61093"/>
<dbReference type="PhosphoSitePlus" id="Q61093"/>
<dbReference type="SwissPalm" id="Q61093"/>
<dbReference type="jPOST" id="Q61093"/>
<dbReference type="PaxDb" id="10090-ENSMUSP00000015484"/>
<dbReference type="ProteomicsDB" id="285357"/>
<dbReference type="Antibodypedia" id="24864">
    <property type="antibodies" value="525 antibodies from 41 providers"/>
</dbReference>
<dbReference type="DNASU" id="13058"/>
<dbReference type="Ensembl" id="ENSMUST00000015484.10">
    <property type="protein sequence ID" value="ENSMUSP00000015484.4"/>
    <property type="gene ID" value="ENSMUSG00000015340.11"/>
</dbReference>
<dbReference type="GeneID" id="13058"/>
<dbReference type="KEGG" id="mmu:13058"/>
<dbReference type="UCSC" id="uc009spv.3">
    <property type="organism name" value="mouse"/>
</dbReference>
<dbReference type="AGR" id="MGI:88574"/>
<dbReference type="CTD" id="1536"/>
<dbReference type="MGI" id="MGI:88574">
    <property type="gene designation" value="Cybb"/>
</dbReference>
<dbReference type="VEuPathDB" id="HostDB:ENSMUSG00000015340"/>
<dbReference type="eggNOG" id="KOG0039">
    <property type="taxonomic scope" value="Eukaryota"/>
</dbReference>
<dbReference type="GeneTree" id="ENSGT00940000160244"/>
<dbReference type="HOGENOM" id="CLU_005646_3_1_1"/>
<dbReference type="InParanoid" id="Q61093"/>
<dbReference type="OMA" id="FTFAKEH"/>
<dbReference type="OrthoDB" id="167398at2759"/>
<dbReference type="PhylomeDB" id="Q61093"/>
<dbReference type="TreeFam" id="TF105354"/>
<dbReference type="Reactome" id="R-MMU-1222556">
    <property type="pathway name" value="ROS and RNS production in phagocytes"/>
</dbReference>
<dbReference type="Reactome" id="R-MMU-1236973">
    <property type="pathway name" value="Cross-presentation of particulate exogenous antigens (phagosomes)"/>
</dbReference>
<dbReference type="Reactome" id="R-MMU-3299685">
    <property type="pathway name" value="Detoxification of Reactive Oxygen Species"/>
</dbReference>
<dbReference type="Reactome" id="R-MMU-4420097">
    <property type="pathway name" value="VEGFA-VEGFR2 Pathway"/>
</dbReference>
<dbReference type="Reactome" id="R-MMU-5668599">
    <property type="pathway name" value="RHO GTPases Activate NADPH Oxidases"/>
</dbReference>
<dbReference type="Reactome" id="R-MMU-6798695">
    <property type="pathway name" value="Neutrophil degranulation"/>
</dbReference>
<dbReference type="Reactome" id="R-MMU-9013149">
    <property type="pathway name" value="RAC1 GTPase cycle"/>
</dbReference>
<dbReference type="Reactome" id="R-MMU-9013404">
    <property type="pathway name" value="RAC2 GTPase cycle"/>
</dbReference>
<dbReference type="Reactome" id="R-MMU-9013423">
    <property type="pathway name" value="RAC3 GTPase cycle"/>
</dbReference>
<dbReference type="BioGRID-ORCS" id="13058">
    <property type="hits" value="1 hit in 77 CRISPR screens"/>
</dbReference>
<dbReference type="ChiTaRS" id="Cybb">
    <property type="organism name" value="mouse"/>
</dbReference>
<dbReference type="PRO" id="PR:Q61093"/>
<dbReference type="Proteomes" id="UP000000589">
    <property type="component" value="Chromosome X"/>
</dbReference>
<dbReference type="RNAct" id="Q61093">
    <property type="molecule type" value="protein"/>
</dbReference>
<dbReference type="Bgee" id="ENSMUSG00000015340">
    <property type="expression patterns" value="Expressed in granulocyte and 122 other cell types or tissues"/>
</dbReference>
<dbReference type="ExpressionAtlas" id="Q61093">
    <property type="expression patterns" value="baseline and differential"/>
</dbReference>
<dbReference type="GO" id="GO:0005737">
    <property type="term" value="C:cytoplasm"/>
    <property type="evidence" value="ECO:0000314"/>
    <property type="project" value="ParkinsonsUK-UCL"/>
</dbReference>
<dbReference type="GO" id="GO:0030425">
    <property type="term" value="C:dendrite"/>
    <property type="evidence" value="ECO:0007669"/>
    <property type="project" value="Ensembl"/>
</dbReference>
<dbReference type="GO" id="GO:0005739">
    <property type="term" value="C:mitochondrion"/>
    <property type="evidence" value="ECO:0007005"/>
    <property type="project" value="MGI"/>
</dbReference>
<dbReference type="GO" id="GO:0034702">
    <property type="term" value="C:monoatomic ion channel complex"/>
    <property type="evidence" value="ECO:0007669"/>
    <property type="project" value="UniProtKB-KW"/>
</dbReference>
<dbReference type="GO" id="GO:0043020">
    <property type="term" value="C:NADPH oxidase complex"/>
    <property type="evidence" value="ECO:0000314"/>
    <property type="project" value="UniProtKB"/>
</dbReference>
<dbReference type="GO" id="GO:0043025">
    <property type="term" value="C:neuronal cell body"/>
    <property type="evidence" value="ECO:0007669"/>
    <property type="project" value="Ensembl"/>
</dbReference>
<dbReference type="GO" id="GO:0005635">
    <property type="term" value="C:nuclear envelope"/>
    <property type="evidence" value="ECO:0007669"/>
    <property type="project" value="Ensembl"/>
</dbReference>
<dbReference type="GO" id="GO:0097038">
    <property type="term" value="C:perinuclear endoplasmic reticulum"/>
    <property type="evidence" value="ECO:0007669"/>
    <property type="project" value="Ensembl"/>
</dbReference>
<dbReference type="GO" id="GO:0045335">
    <property type="term" value="C:phagocytic vesicle"/>
    <property type="evidence" value="ECO:0000314"/>
    <property type="project" value="ParkinsonsUK-UCL"/>
</dbReference>
<dbReference type="GO" id="GO:0005886">
    <property type="term" value="C:plasma membrane"/>
    <property type="evidence" value="ECO:0000314"/>
    <property type="project" value="MGI"/>
</dbReference>
<dbReference type="GO" id="GO:0009055">
    <property type="term" value="F:electron transfer activity"/>
    <property type="evidence" value="ECO:0007669"/>
    <property type="project" value="Ensembl"/>
</dbReference>
<dbReference type="GO" id="GO:0071949">
    <property type="term" value="F:FAD binding"/>
    <property type="evidence" value="ECO:0000250"/>
    <property type="project" value="UniProtKB"/>
</dbReference>
<dbReference type="GO" id="GO:0020037">
    <property type="term" value="F:heme binding"/>
    <property type="evidence" value="ECO:0007669"/>
    <property type="project" value="Ensembl"/>
</dbReference>
<dbReference type="GO" id="GO:0046872">
    <property type="term" value="F:metal ion binding"/>
    <property type="evidence" value="ECO:0007669"/>
    <property type="project" value="UniProtKB-KW"/>
</dbReference>
<dbReference type="GO" id="GO:0070402">
    <property type="term" value="F:NADPH binding"/>
    <property type="evidence" value="ECO:0000250"/>
    <property type="project" value="UniProtKB"/>
</dbReference>
<dbReference type="GO" id="GO:0046982">
    <property type="term" value="F:protein heterodimerization activity"/>
    <property type="evidence" value="ECO:0007669"/>
    <property type="project" value="Ensembl"/>
</dbReference>
<dbReference type="GO" id="GO:0016175">
    <property type="term" value="F:superoxide-generating NAD(P)H oxidase activity"/>
    <property type="evidence" value="ECO:0000314"/>
    <property type="project" value="MGI"/>
</dbReference>
<dbReference type="GO" id="GO:0106292">
    <property type="term" value="F:superoxide-generating NADPH oxidase activity"/>
    <property type="evidence" value="ECO:0000250"/>
    <property type="project" value="UniProtKB"/>
</dbReference>
<dbReference type="GO" id="GO:0071276">
    <property type="term" value="P:cellular response to cadmium ion"/>
    <property type="evidence" value="ECO:0007669"/>
    <property type="project" value="Ensembl"/>
</dbReference>
<dbReference type="GO" id="GO:0071361">
    <property type="term" value="P:cellular response to ethanol"/>
    <property type="evidence" value="ECO:0007669"/>
    <property type="project" value="Ensembl"/>
</dbReference>
<dbReference type="GO" id="GO:1904845">
    <property type="term" value="P:cellular response to L-glutamine"/>
    <property type="evidence" value="ECO:0007669"/>
    <property type="project" value="Ensembl"/>
</dbReference>
<dbReference type="GO" id="GO:0050665">
    <property type="term" value="P:hydrogen peroxide biosynthetic process"/>
    <property type="evidence" value="ECO:0000315"/>
    <property type="project" value="MGI"/>
</dbReference>
<dbReference type="GO" id="GO:0097411">
    <property type="term" value="P:hypoxia-inducible factor-1alpha signaling pathway"/>
    <property type="evidence" value="ECO:0007669"/>
    <property type="project" value="Ensembl"/>
</dbReference>
<dbReference type="GO" id="GO:0006954">
    <property type="term" value="P:inflammatory response"/>
    <property type="evidence" value="ECO:0000315"/>
    <property type="project" value="UniProtKB"/>
</dbReference>
<dbReference type="GO" id="GO:0045087">
    <property type="term" value="P:innate immune response"/>
    <property type="evidence" value="ECO:0000315"/>
    <property type="project" value="UniProtKB"/>
</dbReference>
<dbReference type="GO" id="GO:0034220">
    <property type="term" value="P:monoatomic ion transmembrane transport"/>
    <property type="evidence" value="ECO:0007669"/>
    <property type="project" value="UniProtKB-KW"/>
</dbReference>
<dbReference type="GO" id="GO:0045766">
    <property type="term" value="P:positive regulation of angiogenesis"/>
    <property type="evidence" value="ECO:0007669"/>
    <property type="project" value="Ensembl"/>
</dbReference>
<dbReference type="GO" id="GO:0032760">
    <property type="term" value="P:positive regulation of tumor necrosis factor production"/>
    <property type="evidence" value="ECO:0007669"/>
    <property type="project" value="Ensembl"/>
</dbReference>
<dbReference type="GO" id="GO:0045730">
    <property type="term" value="P:respiratory burst"/>
    <property type="evidence" value="ECO:0007669"/>
    <property type="project" value="Ensembl"/>
</dbReference>
<dbReference type="GO" id="GO:1904044">
    <property type="term" value="P:response to aldosterone"/>
    <property type="evidence" value="ECO:0007669"/>
    <property type="project" value="Ensembl"/>
</dbReference>
<dbReference type="GO" id="GO:1990776">
    <property type="term" value="P:response to angiotensin"/>
    <property type="evidence" value="ECO:0007669"/>
    <property type="project" value="Ensembl"/>
</dbReference>
<dbReference type="GO" id="GO:0007584">
    <property type="term" value="P:response to nutrient"/>
    <property type="evidence" value="ECO:0007669"/>
    <property type="project" value="Ensembl"/>
</dbReference>
<dbReference type="GO" id="GO:0009410">
    <property type="term" value="P:response to xenobiotic stimulus"/>
    <property type="evidence" value="ECO:0007669"/>
    <property type="project" value="Ensembl"/>
</dbReference>
<dbReference type="GO" id="GO:0042554">
    <property type="term" value="P:superoxide anion generation"/>
    <property type="evidence" value="ECO:0000250"/>
    <property type="project" value="UniProtKB"/>
</dbReference>
<dbReference type="GO" id="GO:0006801">
    <property type="term" value="P:superoxide metabolic process"/>
    <property type="evidence" value="ECO:0000315"/>
    <property type="project" value="UniProtKB"/>
</dbReference>
<dbReference type="CDD" id="cd06186">
    <property type="entry name" value="NOX_Duox_like_FAD_NADP"/>
    <property type="match status" value="1"/>
</dbReference>
<dbReference type="FunFam" id="2.40.30.10:FF:000030">
    <property type="entry name" value="cytochrome b-245 heavy chain"/>
    <property type="match status" value="1"/>
</dbReference>
<dbReference type="FunFam" id="3.40.50.80:FF:000004">
    <property type="entry name" value="NADPH oxidase isoform 2"/>
    <property type="match status" value="1"/>
</dbReference>
<dbReference type="Gene3D" id="3.40.50.80">
    <property type="entry name" value="Nucleotide-binding domain of ferredoxin-NADP reductase (FNR) module"/>
    <property type="match status" value="1"/>
</dbReference>
<dbReference type="Gene3D" id="2.40.30.10">
    <property type="entry name" value="Translation factors"/>
    <property type="match status" value="1"/>
</dbReference>
<dbReference type="InterPro" id="IPR000778">
    <property type="entry name" value="Cyt_b245_heavy_chain"/>
</dbReference>
<dbReference type="InterPro" id="IPR013112">
    <property type="entry name" value="FAD-bd_8"/>
</dbReference>
<dbReference type="InterPro" id="IPR017927">
    <property type="entry name" value="FAD-bd_FR_type"/>
</dbReference>
<dbReference type="InterPro" id="IPR013130">
    <property type="entry name" value="Fe3_Rdtase_TM_dom"/>
</dbReference>
<dbReference type="InterPro" id="IPR013121">
    <property type="entry name" value="Fe_red_NAD-bd_6"/>
</dbReference>
<dbReference type="InterPro" id="IPR039261">
    <property type="entry name" value="FNR_nucleotide-bd"/>
</dbReference>
<dbReference type="InterPro" id="IPR050369">
    <property type="entry name" value="RBOH/FRE"/>
</dbReference>
<dbReference type="InterPro" id="IPR017938">
    <property type="entry name" value="Riboflavin_synthase-like_b-brl"/>
</dbReference>
<dbReference type="PANTHER" id="PTHR11972:SF60">
    <property type="entry name" value="CYTOCHROME B-245 HEAVY CHAIN"/>
    <property type="match status" value="1"/>
</dbReference>
<dbReference type="PANTHER" id="PTHR11972">
    <property type="entry name" value="NADPH OXIDASE"/>
    <property type="match status" value="1"/>
</dbReference>
<dbReference type="Pfam" id="PF08022">
    <property type="entry name" value="FAD_binding_8"/>
    <property type="match status" value="1"/>
</dbReference>
<dbReference type="Pfam" id="PF01794">
    <property type="entry name" value="Ferric_reduct"/>
    <property type="match status" value="1"/>
</dbReference>
<dbReference type="Pfam" id="PF08030">
    <property type="entry name" value="NAD_binding_6"/>
    <property type="match status" value="1"/>
</dbReference>
<dbReference type="PRINTS" id="PR00466">
    <property type="entry name" value="GP91PHOX"/>
</dbReference>
<dbReference type="SFLD" id="SFLDS00052">
    <property type="entry name" value="Ferric_Reductase_Domain"/>
    <property type="match status" value="1"/>
</dbReference>
<dbReference type="SFLD" id="SFLDG01168">
    <property type="entry name" value="Ferric_reductase_subgroup_(FRE"/>
    <property type="match status" value="1"/>
</dbReference>
<dbReference type="SUPFAM" id="SSF52343">
    <property type="entry name" value="Ferredoxin reductase-like, C-terminal NADP-linked domain"/>
    <property type="match status" value="1"/>
</dbReference>
<dbReference type="SUPFAM" id="SSF63380">
    <property type="entry name" value="Riboflavin synthase domain-like"/>
    <property type="match status" value="1"/>
</dbReference>
<dbReference type="PROSITE" id="PS51384">
    <property type="entry name" value="FAD_FR"/>
    <property type="match status" value="1"/>
</dbReference>
<keyword id="KW-1003">Cell membrane</keyword>
<keyword id="KW-0249">Electron transport</keyword>
<keyword id="KW-0274">FAD</keyword>
<keyword id="KW-0285">Flavoprotein</keyword>
<keyword id="KW-0325">Glycoprotein</keyword>
<keyword id="KW-0349">Heme</keyword>
<keyword id="KW-0407">Ion channel</keyword>
<keyword id="KW-0406">Ion transport</keyword>
<keyword id="KW-0408">Iron</keyword>
<keyword id="KW-1017">Isopeptide bond</keyword>
<keyword id="KW-0472">Membrane</keyword>
<keyword id="KW-0479">Metal-binding</keyword>
<keyword id="KW-0521">NADP</keyword>
<keyword id="KW-0560">Oxidoreductase</keyword>
<keyword id="KW-0597">Phosphoprotein</keyword>
<keyword id="KW-1185">Reference proteome</keyword>
<keyword id="KW-0812">Transmembrane</keyword>
<keyword id="KW-1133">Transmembrane helix</keyword>
<keyword id="KW-0813">Transport</keyword>
<keyword id="KW-0832">Ubl conjugation</keyword>
<keyword id="KW-0851">Voltage-gated channel</keyword>
<evidence type="ECO:0000250" key="1">
    <source>
        <dbReference type="UniProtKB" id="P04839"/>
    </source>
</evidence>
<evidence type="ECO:0000250" key="2">
    <source>
        <dbReference type="UniProtKB" id="P13498"/>
    </source>
</evidence>
<evidence type="ECO:0000255" key="3"/>
<evidence type="ECO:0000255" key="4">
    <source>
        <dbReference type="PROSITE-ProRule" id="PRU00716"/>
    </source>
</evidence>
<evidence type="ECO:0000269" key="5">
    <source>
    </source>
</evidence>
<evidence type="ECO:0000269" key="6">
    <source>
    </source>
</evidence>
<evidence type="ECO:0000269" key="7">
    <source>
    </source>
</evidence>
<evidence type="ECO:0000269" key="8">
    <source>
    </source>
</evidence>
<evidence type="ECO:0000305" key="9"/>
<evidence type="ECO:0000305" key="10">
    <source>
    </source>
</evidence>
<evidence type="ECO:0000312" key="11">
    <source>
        <dbReference type="MGI" id="MGI:88574"/>
    </source>
</evidence>
<accession>Q61093</accession>
<name>CY24B_MOUSE</name>
<protein>
    <recommendedName>
        <fullName evidence="9">NADPH oxidase 2</fullName>
        <ecNumber evidence="1">1.6.3.-</ecNumber>
    </recommendedName>
    <alternativeName>
        <fullName>CGD91-phox</fullName>
    </alternativeName>
    <alternativeName>
        <fullName>Cytochrome b(558) subunit beta</fullName>
        <shortName>Cytochrome b558 subunit beta</shortName>
    </alternativeName>
    <alternativeName>
        <fullName>Cytochrome b-245 heavy chain</fullName>
    </alternativeName>
    <alternativeName>
        <fullName>Heme-binding membrane glycoprotein gp91phox</fullName>
    </alternativeName>
    <alternativeName>
        <fullName>Neutrophil cytochrome b 91 kDa polypeptide</fullName>
    </alternativeName>
    <alternativeName>
        <fullName>gp91-1</fullName>
    </alternativeName>
    <alternativeName>
        <fullName>gp91-phox</fullName>
    </alternativeName>
    <alternativeName>
        <fullName>p22 phagocyte B-cytochrome</fullName>
    </alternativeName>
</protein>
<sequence>MGNWAVNEGLSIFVILVWLGLNVFLFINYYKVYDDGPKYNYTRKLLGSALALARAPAACLNFNCMLILLPVCRNLLSFLRGSSACCSTRIRRQLDRNLTFHKMVAWMIALHTAIHTIAHLFNVEWCVNARVGISDRYSIALSDIGDNENEEYLNFAREKIKNPEGGLYVAVTRLAGITGIVITLCLILIITSSTKTIRRSYFEVFWYTHHLFVIFFIGLAIHGAERIVRGQTAESLEEHNLDICADKIEEWGKIKECPVPKFAGNPPMTWKWIVGPMFLYLCERLVRFWRSQQKVVITKVVTHPFKTIELQMKKKGFKMEVGQYIFVKCPKVSKLEWHPFTLTSAPEEDFFSIHIRIVGDWTEGLFNACGCDKQEFQDAWKLPKIAVDGPFGTASEDVFSYEVVMLVGAGIGVTPFASILKSVWYKYCDNATSLKLKKIYFYWLCRDTHAFEWFADLLQLLETQMQERNNANFLSYNIYLTGWDESQANHFAVHHDEEKDVITGLKQKTLYGRPNWDNEFKTIASEHPNTTIGVFLCGPEALAETLSKQSISNSESGPRGVHFIFNKENF</sequence>
<gene>
    <name evidence="11" type="primary">Cybb</name>
    <name type="synonym">Cgd</name>
</gene>
<proteinExistence type="evidence at protein level"/>
<reference key="1">
    <citation type="journal article" date="1996" name="Blood">
        <title>Cloning of murine gp91phox cDNA and functional expression in a human X-linked chronic granulomatous disease cell line.</title>
        <authorList>
            <person name="Bjorgvinsdottir H."/>
            <person name="Zhen L."/>
            <person name="Dinauer M.C."/>
        </authorList>
    </citation>
    <scope>NUCLEOTIDE SEQUENCE [MRNA]</scope>
</reference>
<reference key="2">
    <citation type="journal article" date="2004" name="Genome Res.">
        <title>The status, quality, and expansion of the NIH full-length cDNA project: the Mammalian Gene Collection (MGC).</title>
        <authorList>
            <consortium name="The MGC Project Team"/>
        </authorList>
    </citation>
    <scope>NUCLEOTIDE SEQUENCE [LARGE SCALE MRNA]</scope>
    <source>
        <strain>NMRI</strain>
        <tissue>Mammary gland</tissue>
    </source>
</reference>
<reference key="3">
    <citation type="journal article" date="2010" name="Cell">
        <title>A tissue-specific atlas of mouse protein phosphorylation and expression.</title>
        <authorList>
            <person name="Huttlin E.L."/>
            <person name="Jedrychowski M.P."/>
            <person name="Elias J.E."/>
            <person name="Goswami T."/>
            <person name="Rad R."/>
            <person name="Beausoleil S.A."/>
            <person name="Villen J."/>
            <person name="Haas W."/>
            <person name="Sowa M.E."/>
            <person name="Gygi S.P."/>
        </authorList>
    </citation>
    <scope>IDENTIFICATION BY MASS SPECTROMETRY [LARGE SCALE ANALYSIS]</scope>
    <source>
        <tissue>Lung</tissue>
        <tissue>Spleen</tissue>
    </source>
</reference>
<reference key="4">
    <citation type="journal article" date="2011" name="Science">
        <title>A family of IFN-gamma-inducible 65-kD GTPases protects against bacterial infection.</title>
        <authorList>
            <person name="Kim B.H."/>
            <person name="Shenoy A.R."/>
            <person name="Kumar P."/>
            <person name="Das R."/>
            <person name="Tiwari S."/>
            <person name="MacMicking J.D."/>
        </authorList>
    </citation>
    <scope>INTERACTION WITH NCF2 AND GBP7</scope>
</reference>
<reference key="5">
    <citation type="journal article" date="2014" name="Nature">
        <title>NRROS negatively regulates reactive oxygen species during host defence and autoimmunity.</title>
        <authorList>
            <person name="Noubade R."/>
            <person name="Wong K."/>
            <person name="Ota N."/>
            <person name="Rutz S."/>
            <person name="Eidenschenk C."/>
            <person name="Valdez P.A."/>
            <person name="Ding J."/>
            <person name="Peng I."/>
            <person name="Sebrell A."/>
            <person name="Caplazi P."/>
            <person name="Devoss J."/>
            <person name="Soriano R.H."/>
            <person name="Sai T."/>
            <person name="Lu R."/>
            <person name="Modrusan Z."/>
            <person name="Hackney J."/>
            <person name="Ouyang W."/>
        </authorList>
    </citation>
    <scope>INTERACTION WITH NRROS</scope>
    <scope>FUNCTION</scope>
</reference>
<reference key="6">
    <citation type="journal article" date="2015" name="Nat. Commun.">
        <title>Functional genomics identifies negative regulatory nodes controlling phagocyte oxidative burst.</title>
        <authorList>
            <person name="Graham D.B."/>
            <person name="Becker C.E."/>
            <person name="Doan A."/>
            <person name="Goel G."/>
            <person name="Villablanca E.J."/>
            <person name="Knights D."/>
            <person name="Mok A."/>
            <person name="Ng A.C."/>
            <person name="Doench J.G."/>
            <person name="Root D.E."/>
            <person name="Clish C.B."/>
            <person name="Xavier R.J."/>
        </authorList>
    </citation>
    <scope>UBIQUITINATION AT LYS-159; LYS-161; LYS-255; LYS-294; LYS-299; LYS-306; LYS-328; LYS-334; LYS-381; LYS-506 AND LYS-567</scope>
</reference>
<reference key="7">
    <citation type="journal article" date="2017" name="J. Exp. Med.">
        <title>Eros is a novel transmembrane protein that controls the phagocyte respiratory burst and is essential for innate immunity.</title>
        <authorList>
            <person name="Thomas D.C."/>
            <person name="Clare S."/>
            <person name="Sowerby J.M."/>
            <person name="Pardo M."/>
            <person name="Juss J.K."/>
            <person name="Goulding D.A."/>
            <person name="van der Weyden L."/>
            <person name="Storisteanu D."/>
            <person name="Prakash A."/>
            <person name="Espeli M."/>
            <person name="Flint S."/>
            <person name="Lee J.C."/>
            <person name="Hoenderdos K."/>
            <person name="Kane L."/>
            <person name="Harcourt K."/>
            <person name="Mukhopadhyay S."/>
            <person name="Umrania Y."/>
            <person name="Antrobus R."/>
            <person name="Nathan J.A."/>
            <person name="Adams D.J."/>
            <person name="Bateman A."/>
            <person name="Choudhary J.S."/>
            <person name="Lyons P.A."/>
            <person name="Condliffe A.M."/>
            <person name="Chilvers E.R."/>
            <person name="Dougan G."/>
            <person name="Smith K.G."/>
        </authorList>
    </citation>
    <scope>DISRUPTION PHENOTYPE</scope>
    <scope>SUBCELLULAR LOCATION</scope>
</reference>
<organism>
    <name type="scientific">Mus musculus</name>
    <name type="common">Mouse</name>
    <dbReference type="NCBI Taxonomy" id="10090"/>
    <lineage>
        <taxon>Eukaryota</taxon>
        <taxon>Metazoa</taxon>
        <taxon>Chordata</taxon>
        <taxon>Craniata</taxon>
        <taxon>Vertebrata</taxon>
        <taxon>Euteleostomi</taxon>
        <taxon>Mammalia</taxon>
        <taxon>Eutheria</taxon>
        <taxon>Euarchontoglires</taxon>
        <taxon>Glires</taxon>
        <taxon>Rodentia</taxon>
        <taxon>Myomorpha</taxon>
        <taxon>Muroidea</taxon>
        <taxon>Muridae</taxon>
        <taxon>Murinae</taxon>
        <taxon>Mus</taxon>
        <taxon>Mus</taxon>
    </lineage>
</organism>
<feature type="initiator methionine" description="Removed" evidence="1">
    <location>
        <position position="1"/>
    </location>
</feature>
<feature type="chain" id="PRO_0000210146" description="NADPH oxidase 2">
    <location>
        <begin position="2"/>
        <end position="570"/>
    </location>
</feature>
<feature type="topological domain" description="Cytoplasmic" evidence="9">
    <location>
        <begin position="2"/>
        <end position="9"/>
    </location>
</feature>
<feature type="transmembrane region" description="Helical" evidence="1">
    <location>
        <begin position="10"/>
        <end position="36"/>
    </location>
</feature>
<feature type="topological domain" description="Extracellular" evidence="9">
    <location>
        <begin position="37"/>
        <end position="46"/>
    </location>
</feature>
<feature type="transmembrane region" description="Helical" evidence="1">
    <location>
        <begin position="47"/>
        <end position="72"/>
    </location>
</feature>
<feature type="topological domain" description="Cytoplasmic" evidence="9">
    <location>
        <begin position="73"/>
        <end position="95"/>
    </location>
</feature>
<feature type="transmembrane region" description="Helical" evidence="1">
    <location>
        <begin position="96"/>
        <end position="130"/>
    </location>
</feature>
<feature type="topological domain" description="Extracellular" evidence="9">
    <location>
        <begin position="131"/>
        <end position="163"/>
    </location>
</feature>
<feature type="transmembrane region" description="Helical" evidence="1">
    <location>
        <begin position="164"/>
        <end position="194"/>
    </location>
</feature>
<feature type="topological domain" description="Cytoplasmic" evidence="9">
    <location>
        <begin position="195"/>
        <end position="203"/>
    </location>
</feature>
<feature type="transmembrane region" description="Helical" evidence="1">
    <location>
        <begin position="204"/>
        <end position="222"/>
    </location>
</feature>
<feature type="topological domain" description="Extracellular" evidence="9">
    <location>
        <begin position="223"/>
        <end position="267"/>
    </location>
</feature>
<feature type="transmembrane region" description="Helical" evidence="1">
    <location>
        <begin position="268"/>
        <end position="285"/>
    </location>
</feature>
<feature type="topological domain" description="Cytoplasmic" evidence="9">
    <location>
        <begin position="286"/>
        <end position="570"/>
    </location>
</feature>
<feature type="domain" description="Ferric oxidoreductase">
    <location>
        <begin position="54"/>
        <end position="286"/>
    </location>
</feature>
<feature type="domain" description="FAD-binding FR-type" evidence="4">
    <location>
        <begin position="287"/>
        <end position="397"/>
    </location>
</feature>
<feature type="binding site" description="axial binding residue" evidence="1">
    <location>
        <position position="101"/>
    </location>
    <ligand>
        <name>heme b</name>
        <dbReference type="ChEBI" id="CHEBI:60344"/>
        <label>1</label>
    </ligand>
    <ligandPart>
        <name>Fe</name>
        <dbReference type="ChEBI" id="CHEBI:18248"/>
    </ligandPart>
</feature>
<feature type="binding site" description="axial binding residue" evidence="1">
    <location>
        <position position="115"/>
    </location>
    <ligand>
        <name>heme b</name>
        <dbReference type="ChEBI" id="CHEBI:60344"/>
        <label>2</label>
    </ligand>
    <ligandPart>
        <name>Fe</name>
        <dbReference type="ChEBI" id="CHEBI:18248"/>
    </ligandPart>
</feature>
<feature type="binding site" evidence="1">
    <location>
        <position position="199"/>
    </location>
    <ligand>
        <name>FAD</name>
        <dbReference type="ChEBI" id="CHEBI:57692"/>
    </ligand>
</feature>
<feature type="binding site" evidence="1">
    <location>
        <position position="200"/>
    </location>
    <ligand>
        <name>FAD</name>
        <dbReference type="ChEBI" id="CHEBI:57692"/>
    </ligand>
</feature>
<feature type="binding site" evidence="1">
    <location>
        <position position="206"/>
    </location>
    <ligand>
        <name>heme b</name>
        <dbReference type="ChEBI" id="CHEBI:60344"/>
        <label>1</label>
    </ligand>
</feature>
<feature type="binding site" description="axial binding residue" evidence="1">
    <location>
        <position position="209"/>
    </location>
    <ligand>
        <name>heme b</name>
        <dbReference type="ChEBI" id="CHEBI:60344"/>
        <label>1</label>
    </ligand>
    <ligandPart>
        <name>Fe</name>
        <dbReference type="ChEBI" id="CHEBI:18248"/>
    </ligandPart>
</feature>
<feature type="binding site" description="axial binding residue" evidence="1">
    <location>
        <position position="222"/>
    </location>
    <ligand>
        <name>heme b</name>
        <dbReference type="ChEBI" id="CHEBI:60344"/>
        <label>2</label>
    </ligand>
    <ligandPart>
        <name>Fe</name>
        <dbReference type="ChEBI" id="CHEBI:18248"/>
    </ligandPart>
</feature>
<feature type="binding site" evidence="1">
    <location>
        <position position="226"/>
    </location>
    <ligand>
        <name>heme b</name>
        <dbReference type="ChEBI" id="CHEBI:60344"/>
        <label>2</label>
    </ligand>
</feature>
<feature type="binding site" evidence="1">
    <location>
        <position position="227"/>
    </location>
    <ligand>
        <name>heme b</name>
        <dbReference type="ChEBI" id="CHEBI:60344"/>
        <label>2</label>
    </ligand>
</feature>
<feature type="binding site" evidence="1">
    <location>
        <position position="268"/>
    </location>
    <ligand>
        <name>heme b</name>
        <dbReference type="ChEBI" id="CHEBI:60344"/>
        <label>2</label>
    </ligand>
</feature>
<feature type="binding site" evidence="1">
    <location>
        <position position="280"/>
    </location>
    <ligand>
        <name>heme b</name>
        <dbReference type="ChEBI" id="CHEBI:60344"/>
        <label>1</label>
    </ligand>
</feature>
<feature type="binding site" evidence="1">
    <location>
        <position position="287"/>
    </location>
    <ligand>
        <name>heme b</name>
        <dbReference type="ChEBI" id="CHEBI:60344"/>
        <label>1</label>
    </ligand>
</feature>
<feature type="binding site" evidence="1">
    <location>
        <position position="337"/>
    </location>
    <ligand>
        <name>FAD</name>
        <dbReference type="ChEBI" id="CHEBI:57692"/>
    </ligand>
</feature>
<feature type="binding site" evidence="1">
    <location>
        <position position="338"/>
    </location>
    <ligand>
        <name>FAD</name>
        <dbReference type="ChEBI" id="CHEBI:57692"/>
    </ligand>
</feature>
<feature type="binding site" evidence="1">
    <location>
        <position position="339"/>
    </location>
    <ligand>
        <name>FAD</name>
        <dbReference type="ChEBI" id="CHEBI:57692"/>
    </ligand>
</feature>
<feature type="binding site" evidence="1">
    <location>
        <position position="341"/>
    </location>
    <ligand>
        <name>FAD</name>
        <dbReference type="ChEBI" id="CHEBI:57692"/>
    </ligand>
</feature>
<feature type="binding site" evidence="1">
    <location>
        <position position="354"/>
    </location>
    <ligand>
        <name>FAD</name>
        <dbReference type="ChEBI" id="CHEBI:57692"/>
    </ligand>
</feature>
<feature type="binding site" evidence="1">
    <location>
        <position position="356"/>
    </location>
    <ligand>
        <name>FAD</name>
        <dbReference type="ChEBI" id="CHEBI:57692"/>
    </ligand>
</feature>
<feature type="binding site" evidence="1">
    <location>
        <position position="361"/>
    </location>
    <ligand>
        <name>FAD</name>
        <dbReference type="ChEBI" id="CHEBI:57692"/>
    </ligand>
</feature>
<feature type="binding site" evidence="1">
    <location>
        <position position="362"/>
    </location>
    <ligand>
        <name>FAD</name>
        <dbReference type="ChEBI" id="CHEBI:57692"/>
    </ligand>
</feature>
<feature type="binding site" evidence="1">
    <location>
        <position position="411"/>
    </location>
    <ligand>
        <name>NADPH</name>
        <dbReference type="ChEBI" id="CHEBI:57783"/>
    </ligand>
</feature>
<feature type="binding site" evidence="1">
    <location>
        <position position="446"/>
    </location>
    <ligand>
        <name>NADPH</name>
        <dbReference type="ChEBI" id="CHEBI:57783"/>
    </ligand>
</feature>
<feature type="binding site" evidence="1">
    <location>
        <position position="481"/>
    </location>
    <ligand>
        <name>NADPH</name>
        <dbReference type="ChEBI" id="CHEBI:57783"/>
    </ligand>
</feature>
<feature type="binding site" evidence="1">
    <location>
        <position position="513"/>
    </location>
    <ligand>
        <name>NADPH</name>
        <dbReference type="ChEBI" id="CHEBI:57783"/>
    </ligand>
</feature>
<feature type="glycosylation site" description="N-linked (GlcNAc...) asparagine" evidence="3">
    <location>
        <position position="40"/>
    </location>
</feature>
<feature type="cross-link" description="Glycyl lysine isopeptide (Lys-Gly) (interchain with G-Cter in ubiquitin)" evidence="7">
    <location>
        <position position="159"/>
    </location>
</feature>
<feature type="cross-link" description="Glycyl lysine isopeptide (Lys-Gly) (interchain with G-Cter in ubiquitin)" evidence="7">
    <location>
        <position position="161"/>
    </location>
</feature>
<feature type="cross-link" description="Glycyl lysine isopeptide (Lys-Gly) (interchain with G-Cter in ubiquitin)" evidence="7">
    <location>
        <position position="255"/>
    </location>
</feature>
<feature type="cross-link" description="Glycyl lysine isopeptide (Lys-Gly) (interchain with G-Cter in ubiquitin)" evidence="7">
    <location>
        <position position="294"/>
    </location>
</feature>
<feature type="cross-link" description="Glycyl lysine isopeptide (Lys-Gly) (interchain with G-Cter in ubiquitin)" evidence="7">
    <location>
        <position position="299"/>
    </location>
</feature>
<feature type="cross-link" description="Glycyl lysine isopeptide (Lys-Gly) (interchain with G-Cter in ubiquitin)" evidence="7">
    <location>
        <position position="306"/>
    </location>
</feature>
<feature type="cross-link" description="Glycyl lysine isopeptide (Lys-Gly) (interchain with G-Cter in ubiquitin)" evidence="7">
    <location>
        <position position="328"/>
    </location>
</feature>
<feature type="cross-link" description="Glycyl lysine isopeptide (Lys-Gly) (interchain with G-Cter in ubiquitin)" evidence="7">
    <location>
        <position position="334"/>
    </location>
</feature>
<feature type="cross-link" description="Glycyl lysine isopeptide (Lys-Gly) (interchain with G-Cter in ubiquitin)" evidence="7">
    <location>
        <position position="381"/>
    </location>
</feature>
<feature type="cross-link" description="Glycyl lysine isopeptide (Lys-Gly) (interchain with G-Cter in ubiquitin)" evidence="7">
    <location>
        <position position="506"/>
    </location>
</feature>
<feature type="cross-link" description="Glycyl lysine isopeptide (Lys-Gly) (interchain with G-Cter in ubiquitin)" evidence="7">
    <location>
        <position position="567"/>
    </location>
</feature>